<accession>B2LW77</accession>
<accession>F1RRJ8</accession>
<sequence length="383" mass="40622">MPSGCRCLHLVCLLCILAAPVKPVRADDCSSHCDLAHGCCAPDGSCRCDPGWEGLHCERCVRMPGCQHGTCHQPWQCICHSGWAGKFCDKDEHVCTTQSPCRNGGQCIYDGGGEYHCVCPPGFHGRDCERKEGPCEQAGSPCRNGGQCQDDQGFALNYTCRCLAGFVGAHCEVNVDDCLMRPCANGATCLDGINRFSCLCPEGFAGRFCTINLDDCASRPCQRGARCRDRVHDFDCLCPSGYGGKTCELVLPVPDPATTADIPPGPTLAVVVPATGPIPHSAGAGLLRISVKEVVRRQEAGLGKSSLVAVVVFGAVTATLVLSTVLLTLRAWRRGVCPPGPCCYPAPHYAPARQDQECQVSMLPAGLPLPPDLPPEPGKTTAL</sequence>
<organism>
    <name type="scientific">Sus scrofa</name>
    <name type="common">Pig</name>
    <dbReference type="NCBI Taxonomy" id="9823"/>
    <lineage>
        <taxon>Eukaryota</taxon>
        <taxon>Metazoa</taxon>
        <taxon>Chordata</taxon>
        <taxon>Craniata</taxon>
        <taxon>Vertebrata</taxon>
        <taxon>Euteleostomi</taxon>
        <taxon>Mammalia</taxon>
        <taxon>Eutheria</taxon>
        <taxon>Laurasiatheria</taxon>
        <taxon>Artiodactyla</taxon>
        <taxon>Suina</taxon>
        <taxon>Suidae</taxon>
        <taxon>Sus</taxon>
    </lineage>
</organism>
<name>DLK2_PIG</name>
<feature type="signal peptide" evidence="2">
    <location>
        <begin position="1"/>
        <end position="26"/>
    </location>
</feature>
<feature type="chain" id="PRO_0000410796" description="Protein delta homolog 2">
    <location>
        <begin position="27"/>
        <end position="383"/>
    </location>
</feature>
<feature type="topological domain" description="Extracellular" evidence="2">
    <location>
        <begin position="27"/>
        <end position="306"/>
    </location>
</feature>
<feature type="transmembrane region" description="Helical" evidence="2">
    <location>
        <begin position="307"/>
        <end position="327"/>
    </location>
</feature>
<feature type="topological domain" description="Cytoplasmic" evidence="2">
    <location>
        <begin position="328"/>
        <end position="383"/>
    </location>
</feature>
<feature type="domain" description="EGF-like 1" evidence="3">
    <location>
        <begin position="27"/>
        <end position="58"/>
    </location>
</feature>
<feature type="domain" description="EGF-like 2" evidence="3">
    <location>
        <begin position="62"/>
        <end position="89"/>
    </location>
</feature>
<feature type="domain" description="EGF-like 3" evidence="3">
    <location>
        <begin position="91"/>
        <end position="129"/>
    </location>
</feature>
<feature type="domain" description="EGF-like 4" evidence="3">
    <location>
        <begin position="131"/>
        <end position="172"/>
    </location>
</feature>
<feature type="domain" description="EGF-like 5; calcium-binding" evidence="3">
    <location>
        <begin position="174"/>
        <end position="210"/>
    </location>
</feature>
<feature type="domain" description="EGF-like 6; calcium-binding" evidence="3">
    <location>
        <begin position="212"/>
        <end position="248"/>
    </location>
</feature>
<feature type="glycosylation site" description="N-linked (GlcNAc...) asparagine" evidence="2">
    <location>
        <position position="157"/>
    </location>
</feature>
<feature type="disulfide bond" evidence="3">
    <location>
        <begin position="29"/>
        <end position="40"/>
    </location>
</feature>
<feature type="disulfide bond" evidence="3">
    <location>
        <begin position="33"/>
        <end position="46"/>
    </location>
</feature>
<feature type="disulfide bond" evidence="3">
    <location>
        <begin position="48"/>
        <end position="57"/>
    </location>
</feature>
<feature type="disulfide bond" evidence="3">
    <location>
        <begin position="66"/>
        <end position="71"/>
    </location>
</feature>
<feature type="disulfide bond" evidence="3">
    <location>
        <begin position="79"/>
        <end position="88"/>
    </location>
</feature>
<feature type="disulfide bond" evidence="3">
    <location>
        <begin position="95"/>
        <end position="107"/>
    </location>
</feature>
<feature type="disulfide bond" evidence="3">
    <location>
        <begin position="101"/>
        <end position="117"/>
    </location>
</feature>
<feature type="disulfide bond" evidence="3">
    <location>
        <begin position="119"/>
        <end position="128"/>
    </location>
</feature>
<feature type="disulfide bond" evidence="3">
    <location>
        <begin position="135"/>
        <end position="148"/>
    </location>
</feature>
<feature type="disulfide bond" evidence="3">
    <location>
        <begin position="142"/>
        <end position="160"/>
    </location>
</feature>
<feature type="disulfide bond" evidence="3">
    <location>
        <begin position="162"/>
        <end position="171"/>
    </location>
</feature>
<feature type="disulfide bond" evidence="3">
    <location>
        <begin position="178"/>
        <end position="189"/>
    </location>
</feature>
<feature type="disulfide bond" evidence="3">
    <location>
        <begin position="183"/>
        <end position="198"/>
    </location>
</feature>
<feature type="disulfide bond" evidence="3">
    <location>
        <begin position="200"/>
        <end position="209"/>
    </location>
</feature>
<feature type="disulfide bond" evidence="3">
    <location>
        <begin position="216"/>
        <end position="227"/>
    </location>
</feature>
<feature type="disulfide bond" evidence="3">
    <location>
        <begin position="221"/>
        <end position="236"/>
    </location>
</feature>
<feature type="disulfide bond" evidence="3">
    <location>
        <begin position="238"/>
        <end position="247"/>
    </location>
</feature>
<feature type="sequence conflict" description="In Ref. 1; ACB88022." evidence="4" ref="1">
    <original>A</original>
    <variation>G</variation>
    <location>
        <position position="18"/>
    </location>
</feature>
<feature type="sequence conflict" description="In Ref. 1; ACB88022." evidence="4" ref="1">
    <original>I</original>
    <variation>V</variation>
    <location>
        <position position="108"/>
    </location>
</feature>
<feature type="sequence conflict" description="In Ref. 1; ACB88022." evidence="4" ref="1">
    <original>V</original>
    <variation>A</variation>
    <location>
        <position position="250"/>
    </location>
</feature>
<feature type="sequence conflict" description="In Ref. 1; ACB88022." evidence="4" ref="1">
    <original>S</original>
    <variation>G</variation>
    <location>
        <position position="281"/>
    </location>
</feature>
<feature type="sequence conflict" description="In Ref. 1; ACB88022." evidence="4" ref="1">
    <original>K</original>
    <variation>E</variation>
    <location>
        <position position="304"/>
    </location>
</feature>
<protein>
    <recommendedName>
        <fullName>Protein delta homolog 2</fullName>
        <shortName>DLK-2</shortName>
    </recommendedName>
    <alternativeName>
        <fullName>Epidermal growth factor-like protein 9</fullName>
        <shortName>EGF-like protein 9</shortName>
    </alternativeName>
</protein>
<proteinExistence type="evidence at transcript level"/>
<comment type="function">
    <text evidence="1">Regulates adipogenesis.</text>
</comment>
<comment type="subcellular location">
    <subcellularLocation>
        <location evidence="4">Membrane</location>
        <topology evidence="4">Single-pass type I membrane protein</topology>
    </subcellularLocation>
</comment>
<evidence type="ECO:0000250" key="1"/>
<evidence type="ECO:0000255" key="2"/>
<evidence type="ECO:0000255" key="3">
    <source>
        <dbReference type="PROSITE-ProRule" id="PRU00076"/>
    </source>
</evidence>
<evidence type="ECO:0000305" key="4"/>
<reference key="1">
    <citation type="submission" date="2008-03" db="EMBL/GenBank/DDBJ databases">
        <authorList>
            <person name="Wang J."/>
            <person name="Yang G.-Y."/>
            <person name="Li H.-J."/>
            <person name="Wang Y.-L."/>
            <person name="Zhao W.-D."/>
            <person name="Wang W.-J."/>
            <person name="Zhang Z.-Q."/>
        </authorList>
    </citation>
    <scope>NUCLEOTIDE SEQUENCE [MRNA]</scope>
</reference>
<reference key="2">
    <citation type="submission" date="2008-10" db="EMBL/GenBank/DDBJ databases">
        <authorList>
            <consortium name="Porcine genome sequencing project"/>
        </authorList>
    </citation>
    <scope>NUCLEOTIDE SEQUENCE [LARGE SCALE GENOMIC DNA]</scope>
</reference>
<keyword id="KW-0106">Calcium</keyword>
<keyword id="KW-1015">Disulfide bond</keyword>
<keyword id="KW-0245">EGF-like domain</keyword>
<keyword id="KW-0325">Glycoprotein</keyword>
<keyword id="KW-0472">Membrane</keyword>
<keyword id="KW-1185">Reference proteome</keyword>
<keyword id="KW-0677">Repeat</keyword>
<keyword id="KW-0732">Signal</keyword>
<keyword id="KW-0812">Transmembrane</keyword>
<keyword id="KW-1133">Transmembrane helix</keyword>
<dbReference type="EMBL" id="EU589332">
    <property type="protein sequence ID" value="ACB88022.1"/>
    <property type="molecule type" value="mRNA"/>
</dbReference>
<dbReference type="EMBL" id="CU928765">
    <property type="status" value="NOT_ANNOTATED_CDS"/>
    <property type="molecule type" value="Genomic_DNA"/>
</dbReference>
<dbReference type="RefSeq" id="NP_001121938.1">
    <property type="nucleotide sequence ID" value="NM_001128466.1"/>
</dbReference>
<dbReference type="RefSeq" id="XP_005666087.1">
    <property type="nucleotide sequence ID" value="XM_005666030.3"/>
</dbReference>
<dbReference type="RefSeq" id="XP_005666088.1">
    <property type="nucleotide sequence ID" value="XM_005666031.2"/>
</dbReference>
<dbReference type="SMR" id="B2LW77"/>
<dbReference type="FunCoup" id="B2LW77">
    <property type="interactions" value="132"/>
</dbReference>
<dbReference type="STRING" id="9823.ENSSSCP00000001831"/>
<dbReference type="GlyCosmos" id="B2LW77">
    <property type="glycosylation" value="1 site, No reported glycans"/>
</dbReference>
<dbReference type="GlyGen" id="B2LW77">
    <property type="glycosylation" value="2 sites"/>
</dbReference>
<dbReference type="PaxDb" id="9823-ENSSSCP00000001830"/>
<dbReference type="Ensembl" id="ENSSSCT00000001877.4">
    <property type="protein sequence ID" value="ENSSSCP00000001830.1"/>
    <property type="gene ID" value="ENSSSCG00000001682.5"/>
</dbReference>
<dbReference type="GeneID" id="100145892"/>
<dbReference type="KEGG" id="ssc:100145892"/>
<dbReference type="CTD" id="65989"/>
<dbReference type="VGNC" id="VGNC:87334">
    <property type="gene designation" value="DLK2"/>
</dbReference>
<dbReference type="eggNOG" id="KOG1217">
    <property type="taxonomic scope" value="Eukaryota"/>
</dbReference>
<dbReference type="eggNOG" id="KOG1219">
    <property type="taxonomic scope" value="Eukaryota"/>
</dbReference>
<dbReference type="GeneTree" id="ENSGT00940000160761"/>
<dbReference type="HOGENOM" id="CLU_039179_1_0_1"/>
<dbReference type="InParanoid" id="B2LW77"/>
<dbReference type="OrthoDB" id="430340at2759"/>
<dbReference type="TreeFam" id="TF351835"/>
<dbReference type="Proteomes" id="UP000008227">
    <property type="component" value="Chromosome 7"/>
</dbReference>
<dbReference type="Proteomes" id="UP000314985">
    <property type="component" value="Unplaced"/>
</dbReference>
<dbReference type="Proteomes" id="UP000694570">
    <property type="component" value="Unplaced"/>
</dbReference>
<dbReference type="Proteomes" id="UP000694571">
    <property type="component" value="Unplaced"/>
</dbReference>
<dbReference type="Proteomes" id="UP000694720">
    <property type="component" value="Unplaced"/>
</dbReference>
<dbReference type="Proteomes" id="UP000694722">
    <property type="component" value="Unplaced"/>
</dbReference>
<dbReference type="Proteomes" id="UP000694723">
    <property type="component" value="Unplaced"/>
</dbReference>
<dbReference type="Proteomes" id="UP000694724">
    <property type="component" value="Unplaced"/>
</dbReference>
<dbReference type="Proteomes" id="UP000694725">
    <property type="component" value="Unplaced"/>
</dbReference>
<dbReference type="Proteomes" id="UP000694726">
    <property type="component" value="Unplaced"/>
</dbReference>
<dbReference type="Proteomes" id="UP000694727">
    <property type="component" value="Unplaced"/>
</dbReference>
<dbReference type="Proteomes" id="UP000694728">
    <property type="component" value="Unplaced"/>
</dbReference>
<dbReference type="Bgee" id="ENSSSCG00000001682">
    <property type="expression patterns" value="Expressed in frontal cortex and 19 other cell types or tissues"/>
</dbReference>
<dbReference type="ExpressionAtlas" id="B2LW77">
    <property type="expression patterns" value="baseline"/>
</dbReference>
<dbReference type="GO" id="GO:0016020">
    <property type="term" value="C:membrane"/>
    <property type="evidence" value="ECO:0007669"/>
    <property type="project" value="UniProtKB-SubCell"/>
</dbReference>
<dbReference type="GO" id="GO:0005509">
    <property type="term" value="F:calcium ion binding"/>
    <property type="evidence" value="ECO:0007669"/>
    <property type="project" value="InterPro"/>
</dbReference>
<dbReference type="GO" id="GO:0042802">
    <property type="term" value="F:identical protein binding"/>
    <property type="evidence" value="ECO:0007669"/>
    <property type="project" value="Ensembl"/>
</dbReference>
<dbReference type="GO" id="GO:0005112">
    <property type="term" value="F:Notch binding"/>
    <property type="evidence" value="ECO:0000318"/>
    <property type="project" value="GO_Central"/>
</dbReference>
<dbReference type="GO" id="GO:0045746">
    <property type="term" value="P:negative regulation of Notch signaling pathway"/>
    <property type="evidence" value="ECO:0007669"/>
    <property type="project" value="Ensembl"/>
</dbReference>
<dbReference type="GO" id="GO:0045598">
    <property type="term" value="P:regulation of fat cell differentiation"/>
    <property type="evidence" value="ECO:0007669"/>
    <property type="project" value="Ensembl"/>
</dbReference>
<dbReference type="CDD" id="cd00054">
    <property type="entry name" value="EGF_CA"/>
    <property type="match status" value="4"/>
</dbReference>
<dbReference type="FunFam" id="2.10.25.10:FF:000018">
    <property type="entry name" value="Delta-like 1"/>
    <property type="match status" value="1"/>
</dbReference>
<dbReference type="FunFam" id="2.10.25.10:FF:000263">
    <property type="entry name" value="Protein delta homolog 2"/>
    <property type="match status" value="1"/>
</dbReference>
<dbReference type="FunFam" id="2.10.25.10:FF:000118">
    <property type="entry name" value="protein delta homolog 2"/>
    <property type="match status" value="2"/>
</dbReference>
<dbReference type="FunFam" id="2.10.25.10:FF:000334">
    <property type="entry name" value="protein delta homolog 2 isoform X1"/>
    <property type="match status" value="1"/>
</dbReference>
<dbReference type="Gene3D" id="2.10.25.10">
    <property type="entry name" value="Laminin"/>
    <property type="match status" value="5"/>
</dbReference>
<dbReference type="InterPro" id="IPR001881">
    <property type="entry name" value="EGF-like_Ca-bd_dom"/>
</dbReference>
<dbReference type="InterPro" id="IPR013032">
    <property type="entry name" value="EGF-like_CS"/>
</dbReference>
<dbReference type="InterPro" id="IPR000742">
    <property type="entry name" value="EGF-like_dom"/>
</dbReference>
<dbReference type="InterPro" id="IPR000152">
    <property type="entry name" value="EGF-type_Asp/Asn_hydroxyl_site"/>
</dbReference>
<dbReference type="InterPro" id="IPR018097">
    <property type="entry name" value="EGF_Ca-bd_CS"/>
</dbReference>
<dbReference type="InterPro" id="IPR051022">
    <property type="entry name" value="Notch_Cell-Fate_Det"/>
</dbReference>
<dbReference type="PANTHER" id="PTHR24049">
    <property type="entry name" value="CRUMBS FAMILY MEMBER"/>
    <property type="match status" value="1"/>
</dbReference>
<dbReference type="PANTHER" id="PTHR24049:SF38">
    <property type="entry name" value="DELTA-LIKE PROTEIN"/>
    <property type="match status" value="1"/>
</dbReference>
<dbReference type="Pfam" id="PF00008">
    <property type="entry name" value="EGF"/>
    <property type="match status" value="3"/>
</dbReference>
<dbReference type="Pfam" id="PF21700">
    <property type="entry name" value="EGF_DL_JAG"/>
    <property type="match status" value="1"/>
</dbReference>
<dbReference type="Pfam" id="PF12661">
    <property type="entry name" value="hEGF"/>
    <property type="match status" value="1"/>
</dbReference>
<dbReference type="PRINTS" id="PR00010">
    <property type="entry name" value="EGFBLOOD"/>
</dbReference>
<dbReference type="SMART" id="SM00181">
    <property type="entry name" value="EGF"/>
    <property type="match status" value="6"/>
</dbReference>
<dbReference type="SMART" id="SM00179">
    <property type="entry name" value="EGF_CA"/>
    <property type="match status" value="4"/>
</dbReference>
<dbReference type="SUPFAM" id="SSF57196">
    <property type="entry name" value="EGF/Laminin"/>
    <property type="match status" value="4"/>
</dbReference>
<dbReference type="PROSITE" id="PS00010">
    <property type="entry name" value="ASX_HYDROXYL"/>
    <property type="match status" value="2"/>
</dbReference>
<dbReference type="PROSITE" id="PS00022">
    <property type="entry name" value="EGF_1"/>
    <property type="match status" value="6"/>
</dbReference>
<dbReference type="PROSITE" id="PS01186">
    <property type="entry name" value="EGF_2"/>
    <property type="match status" value="6"/>
</dbReference>
<dbReference type="PROSITE" id="PS50026">
    <property type="entry name" value="EGF_3"/>
    <property type="match status" value="6"/>
</dbReference>
<dbReference type="PROSITE" id="PS01187">
    <property type="entry name" value="EGF_CA"/>
    <property type="match status" value="2"/>
</dbReference>
<gene>
    <name type="primary">DLK2</name>
    <name type="synonym">EGFL9</name>
</gene>